<dbReference type="EMBL" id="X71383">
    <property type="protein sequence ID" value="CAA50505.1"/>
    <property type="molecule type" value="mRNA"/>
</dbReference>
<dbReference type="PIR" id="S34861">
    <property type="entry name" value="S34861"/>
</dbReference>
<dbReference type="SMR" id="Q08364"/>
<dbReference type="GO" id="GO:0015935">
    <property type="term" value="C:small ribosomal subunit"/>
    <property type="evidence" value="ECO:0007669"/>
    <property type="project" value="InterPro"/>
</dbReference>
<dbReference type="GO" id="GO:0003723">
    <property type="term" value="F:RNA binding"/>
    <property type="evidence" value="ECO:0007669"/>
    <property type="project" value="InterPro"/>
</dbReference>
<dbReference type="GO" id="GO:0003735">
    <property type="term" value="F:structural constituent of ribosome"/>
    <property type="evidence" value="ECO:0007669"/>
    <property type="project" value="InterPro"/>
</dbReference>
<dbReference type="GO" id="GO:0006412">
    <property type="term" value="P:translation"/>
    <property type="evidence" value="ECO:0007669"/>
    <property type="project" value="InterPro"/>
</dbReference>
<dbReference type="CDD" id="cd14867">
    <property type="entry name" value="uS7_Eukaryote"/>
    <property type="match status" value="1"/>
</dbReference>
<dbReference type="FunFam" id="1.10.455.10:FF:000002">
    <property type="entry name" value="40S ribosomal protein S5"/>
    <property type="match status" value="1"/>
</dbReference>
<dbReference type="Gene3D" id="1.10.455.10">
    <property type="entry name" value="Ribosomal protein S7 domain"/>
    <property type="match status" value="1"/>
</dbReference>
<dbReference type="InterPro" id="IPR000235">
    <property type="entry name" value="Ribosomal_uS7"/>
</dbReference>
<dbReference type="InterPro" id="IPR020606">
    <property type="entry name" value="Ribosomal_uS7_CS"/>
</dbReference>
<dbReference type="InterPro" id="IPR023798">
    <property type="entry name" value="Ribosomal_uS7_dom"/>
</dbReference>
<dbReference type="InterPro" id="IPR036823">
    <property type="entry name" value="Ribosomal_uS7_dom_sf"/>
</dbReference>
<dbReference type="InterPro" id="IPR005716">
    <property type="entry name" value="Ribosomal_uS7_euk/arc"/>
</dbReference>
<dbReference type="NCBIfam" id="NF003106">
    <property type="entry name" value="PRK04027.1"/>
    <property type="match status" value="1"/>
</dbReference>
<dbReference type="NCBIfam" id="TIGR01028">
    <property type="entry name" value="uS7_euk_arch"/>
    <property type="match status" value="1"/>
</dbReference>
<dbReference type="PANTHER" id="PTHR11205">
    <property type="entry name" value="RIBOSOMAL PROTEIN S7"/>
    <property type="match status" value="1"/>
</dbReference>
<dbReference type="Pfam" id="PF00177">
    <property type="entry name" value="Ribosomal_S7"/>
    <property type="match status" value="1"/>
</dbReference>
<dbReference type="PIRSF" id="PIRSF002122">
    <property type="entry name" value="RPS7p_RPS7a_RPS5e_RPS7o"/>
    <property type="match status" value="1"/>
</dbReference>
<dbReference type="SUPFAM" id="SSF47973">
    <property type="entry name" value="Ribosomal protein S7"/>
    <property type="match status" value="1"/>
</dbReference>
<dbReference type="PROSITE" id="PS00052">
    <property type="entry name" value="RIBOSOMAL_S7"/>
    <property type="match status" value="1"/>
</dbReference>
<name>RS5_PODCA</name>
<evidence type="ECO:0000305" key="1"/>
<comment type="similarity">
    <text evidence="1">Belongs to the universal ribosomal protein uS7 family.</text>
</comment>
<reference key="1">
    <citation type="journal article" date="1993" name="Nucleic Acids Res.">
        <title>Characterization of a cDNA encoding ribosomal protein S5 from the hydrozoan Podocoryne carnea.</title>
        <authorList>
            <person name="Aerne B.L."/>
            <person name="Baader C.D."/>
            <person name="Schmid V."/>
            <person name="Schuchert P."/>
        </authorList>
    </citation>
    <scope>NUCLEOTIDE SEQUENCE [MRNA]</scope>
</reference>
<proteinExistence type="evidence at transcript level"/>
<protein>
    <recommendedName>
        <fullName evidence="1">Small ribosomal subunit protein uS7</fullName>
    </recommendedName>
    <alternativeName>
        <fullName>40S ribosomal protein S5</fullName>
    </alternativeName>
</protein>
<keyword id="KW-0687">Ribonucleoprotein</keyword>
<keyword id="KW-0689">Ribosomal protein</keyword>
<accession>Q08364</accession>
<sequence>MEESWGEPGETVEEPTSIEVQDIKLFGKWPLEGLNISDISLTDYIAVKDNHAVYLPHTAARYAVKRFRKAQCPIVERLTNSLMMHGRNNGKKLMAVRIVRHSFEIMHLLTGENPLQLVCEAISNSGPREDSTRIGRAGTVRRQAVDVAPLRRVNQAIWLLCTGAREASFRNIKSIAECLADELINAARGSSNSYAIKKKDELERVAKSNR</sequence>
<gene>
    <name type="primary">RPS5</name>
</gene>
<feature type="chain" id="PRO_0000124533" description="Small ribosomal subunit protein uS7">
    <location>
        <begin position="1"/>
        <end position="210"/>
    </location>
</feature>
<organism>
    <name type="scientific">Podocoryna carnea</name>
    <name type="common">Hydrozoan</name>
    <dbReference type="NCBI Taxonomy" id="6096"/>
    <lineage>
        <taxon>Eukaryota</taxon>
        <taxon>Metazoa</taxon>
        <taxon>Cnidaria</taxon>
        <taxon>Hydrozoa</taxon>
        <taxon>Hydroidolina</taxon>
        <taxon>Anthoathecata</taxon>
        <taxon>Filifera</taxon>
        <taxon>Hydractiniidae</taxon>
        <taxon>Podocoryna</taxon>
    </lineage>
</organism>